<protein>
    <recommendedName>
        <fullName evidence="5">Beta-amanitin proprotein</fullName>
    </recommendedName>
    <component>
        <recommendedName>
            <fullName evidence="5">Beta-amanitin</fullName>
        </recommendedName>
    </component>
</protein>
<keyword id="KW-0883">Thioether bond</keyword>
<keyword id="KW-0800">Toxin</keyword>
<feature type="propeptide" id="PRO_0000443602" evidence="2">
    <location>
        <begin position="1"/>
        <end position="10"/>
    </location>
</feature>
<feature type="peptide" id="PRO_0000443603" description="Beta-amanitin" evidence="2">
    <location>
        <begin position="11"/>
        <end position="18"/>
    </location>
</feature>
<feature type="propeptide" id="PRO_0000443604" evidence="2">
    <location>
        <begin position="19"/>
        <end position="33"/>
    </location>
</feature>
<feature type="cross-link" description="Cyclopeptide (Ile-Pro)" evidence="2">
    <location>
        <begin position="11"/>
        <end position="18"/>
    </location>
</feature>
<feature type="cross-link" description="2'-cysteinyl-6'-hydroxytryptophan sulfoxide (Trp-Cys)" evidence="3">
    <location>
        <begin position="12"/>
        <end position="16"/>
    </location>
</feature>
<comment type="function">
    <text evidence="7">Toxin belonging to the bicyclic octapeptides amatoxins that acts by binding non-competitively to RNA polymerase II and greatly slowing the elongation of transcripts from target promoters (PubMed:24613547).</text>
</comment>
<comment type="PTM">
    <text evidence="1 7">Processed by the macrocyclase-peptidase enzyme POPB to yield a toxic cyclic decapeptide (PubMed:24613547). POPB first removes 10 residues from the N-terminus (By similarity). Conformational trapping of the remaining peptide forces the enzyme to release this intermediate rather than proceed to macrocyclization (By similarity). The enzyme rebinds the remaining peptide in a different conformation and catalyzes macrocyclization of the N-terminal 8 residues (By similarity).</text>
</comment>
<comment type="miscellaneous">
    <text evidence="4">The typical symptoms of amatoxin poisoning are gastro-intestinal distress beginning 6-12 hours after ingestion, a remission phase lasting 12-24 hours, and progressive loss of liver function culminating in death within 3-5 days (PubMed:12475187). One of the few effective treatments is liver transplantation (PubMed:12475187).</text>
</comment>
<comment type="similarity">
    <text evidence="6">Belongs to the MSDIN fungal toxin family.</text>
</comment>
<accession>A0A023IWE2</accession>
<dbReference type="EMBL" id="KF552090">
    <property type="protein sequence ID" value="AHB18718.1"/>
    <property type="molecule type" value="Genomic_DNA"/>
</dbReference>
<dbReference type="GO" id="GO:0090729">
    <property type="term" value="F:toxin activity"/>
    <property type="evidence" value="ECO:0007669"/>
    <property type="project" value="UniProtKB-KW"/>
</dbReference>
<dbReference type="InterPro" id="IPR027582">
    <property type="entry name" value="Amanitin/phalloidin"/>
</dbReference>
<dbReference type="NCBIfam" id="TIGR04309">
    <property type="entry name" value="amanitin"/>
    <property type="match status" value="1"/>
</dbReference>
<dbReference type="Pfam" id="PF24112">
    <property type="entry name" value="Amanitin"/>
    <property type="match status" value="1"/>
</dbReference>
<name>BAMAT_AMAPL</name>
<reference key="1">
    <citation type="journal article" date="2014" name="Toxicon">
        <title>The molecular diversity of toxin gene families in lethal Amanita mushrooms.</title>
        <authorList>
            <person name="Li P."/>
            <person name="Deng W."/>
            <person name="Li T."/>
        </authorList>
    </citation>
    <scope>NUCLEOTIDE SEQUENCE [GENOMIC DNA]</scope>
    <scope>FUNCTION</scope>
</reference>
<reference key="2">
    <citation type="journal article" date="2002" name="J. Toxicol. Clin. Toxicol.">
        <title>Treatment of amatoxin poisoning: 20-year retrospective analysis.</title>
        <authorList>
            <person name="Enjalbert F."/>
            <person name="Rapior S."/>
            <person name="Nouguier-Soule J."/>
            <person name="Guillon S."/>
            <person name="Amouroux N."/>
            <person name="Cabot C."/>
        </authorList>
    </citation>
    <scope>REVIEW ON TOXICITY</scope>
</reference>
<proteinExistence type="inferred from homology"/>
<sequence>MSDINATRLPIWGIGCDPCVGDDVTAVLTRGEA</sequence>
<evidence type="ECO:0000250" key="1">
    <source>
        <dbReference type="UniProtKB" id="A0A067SLB9"/>
    </source>
</evidence>
<evidence type="ECO:0000250" key="2">
    <source>
        <dbReference type="UniProtKB" id="A8W7M4"/>
    </source>
</evidence>
<evidence type="ECO:0000250" key="3">
    <source>
        <dbReference type="UniProtKB" id="P85421"/>
    </source>
</evidence>
<evidence type="ECO:0000303" key="4">
    <source>
    </source>
</evidence>
<evidence type="ECO:0000303" key="5">
    <source>
    </source>
</evidence>
<evidence type="ECO:0000305" key="6"/>
<evidence type="ECO:0000305" key="7">
    <source>
    </source>
</evidence>
<organism>
    <name type="scientific">Amanita pallidorosea</name>
    <dbReference type="NCBI Taxonomy" id="1324310"/>
    <lineage>
        <taxon>Eukaryota</taxon>
        <taxon>Fungi</taxon>
        <taxon>Dikarya</taxon>
        <taxon>Basidiomycota</taxon>
        <taxon>Agaricomycotina</taxon>
        <taxon>Agaricomycetes</taxon>
        <taxon>Agaricomycetidae</taxon>
        <taxon>Agaricales</taxon>
        <taxon>Pluteineae</taxon>
        <taxon>Amanitaceae</taxon>
        <taxon>Amanita</taxon>
    </lineage>
</organism>